<keyword id="KW-0067">ATP-binding</keyword>
<keyword id="KW-0173">Coenzyme A biosynthesis</keyword>
<keyword id="KW-0963">Cytoplasm</keyword>
<keyword id="KW-0460">Magnesium</keyword>
<keyword id="KW-0547">Nucleotide-binding</keyword>
<keyword id="KW-0548">Nucleotidyltransferase</keyword>
<keyword id="KW-1185">Reference proteome</keyword>
<keyword id="KW-0808">Transferase</keyword>
<evidence type="ECO:0000255" key="1">
    <source>
        <dbReference type="HAMAP-Rule" id="MF_00151"/>
    </source>
</evidence>
<reference key="1">
    <citation type="submission" date="2006-03" db="EMBL/GenBank/DDBJ databases">
        <title>Complete genome sequence of Francisella tularensis LVS (Live Vaccine Strain).</title>
        <authorList>
            <person name="Chain P."/>
            <person name="Larimer F."/>
            <person name="Land M."/>
            <person name="Stilwagen S."/>
            <person name="Larsson P."/>
            <person name="Bearden S."/>
            <person name="Chu M."/>
            <person name="Oyston P."/>
            <person name="Forsman M."/>
            <person name="Andersson S."/>
            <person name="Lindler L."/>
            <person name="Titball R."/>
            <person name="Garcia E."/>
        </authorList>
    </citation>
    <scope>NUCLEOTIDE SEQUENCE [LARGE SCALE GENOMIC DNA]</scope>
    <source>
        <strain>LVS</strain>
    </source>
</reference>
<accession>Q2A2Q6</accession>
<sequence>MNKIAIYPGTFDPITNGHVDLVERALNIFDEIVVAVSTAYGKNTLFDIRIREQMIKEVFKDNQRVKVVSFQGLLVDTAVKHNACAIVRGLRAVSDFDYEFQMSSMNNKLNSDIQTIFLTPSEKFSCISSTLVRAVAIHNYKRVDEFVPECVFREIKLKYSKE</sequence>
<comment type="function">
    <text evidence="1">Reversibly transfers an adenylyl group from ATP to 4'-phosphopantetheine, yielding dephospho-CoA (dPCoA) and pyrophosphate.</text>
</comment>
<comment type="catalytic activity">
    <reaction evidence="1">
        <text>(R)-4'-phosphopantetheine + ATP + H(+) = 3'-dephospho-CoA + diphosphate</text>
        <dbReference type="Rhea" id="RHEA:19801"/>
        <dbReference type="ChEBI" id="CHEBI:15378"/>
        <dbReference type="ChEBI" id="CHEBI:30616"/>
        <dbReference type="ChEBI" id="CHEBI:33019"/>
        <dbReference type="ChEBI" id="CHEBI:57328"/>
        <dbReference type="ChEBI" id="CHEBI:61723"/>
        <dbReference type="EC" id="2.7.7.3"/>
    </reaction>
</comment>
<comment type="cofactor">
    <cofactor evidence="1">
        <name>Mg(2+)</name>
        <dbReference type="ChEBI" id="CHEBI:18420"/>
    </cofactor>
</comment>
<comment type="pathway">
    <text evidence="1">Cofactor biosynthesis; coenzyme A biosynthesis; CoA from (R)-pantothenate: step 4/5.</text>
</comment>
<comment type="subunit">
    <text evidence="1">Homohexamer.</text>
</comment>
<comment type="subcellular location">
    <subcellularLocation>
        <location evidence="1">Cytoplasm</location>
    </subcellularLocation>
</comment>
<comment type="similarity">
    <text evidence="1">Belongs to the bacterial CoaD family.</text>
</comment>
<dbReference type="EC" id="2.7.7.3" evidence="1"/>
<dbReference type="EMBL" id="AM233362">
    <property type="protein sequence ID" value="CAJ79769.1"/>
    <property type="molecule type" value="Genomic_DNA"/>
</dbReference>
<dbReference type="RefSeq" id="WP_003016535.1">
    <property type="nucleotide sequence ID" value="NZ_CP009694.1"/>
</dbReference>
<dbReference type="SMR" id="Q2A2Q6"/>
<dbReference type="KEGG" id="ftl:FTL_1330"/>
<dbReference type="UniPathway" id="UPA00241">
    <property type="reaction ID" value="UER00355"/>
</dbReference>
<dbReference type="Proteomes" id="UP000001944">
    <property type="component" value="Chromosome"/>
</dbReference>
<dbReference type="GO" id="GO:0005737">
    <property type="term" value="C:cytoplasm"/>
    <property type="evidence" value="ECO:0007669"/>
    <property type="project" value="UniProtKB-SubCell"/>
</dbReference>
<dbReference type="GO" id="GO:0005524">
    <property type="term" value="F:ATP binding"/>
    <property type="evidence" value="ECO:0007669"/>
    <property type="project" value="UniProtKB-KW"/>
</dbReference>
<dbReference type="GO" id="GO:0004595">
    <property type="term" value="F:pantetheine-phosphate adenylyltransferase activity"/>
    <property type="evidence" value="ECO:0007669"/>
    <property type="project" value="UniProtKB-UniRule"/>
</dbReference>
<dbReference type="GO" id="GO:0015937">
    <property type="term" value="P:coenzyme A biosynthetic process"/>
    <property type="evidence" value="ECO:0007669"/>
    <property type="project" value="UniProtKB-UniRule"/>
</dbReference>
<dbReference type="CDD" id="cd02163">
    <property type="entry name" value="PPAT"/>
    <property type="match status" value="1"/>
</dbReference>
<dbReference type="Gene3D" id="3.40.50.620">
    <property type="entry name" value="HUPs"/>
    <property type="match status" value="1"/>
</dbReference>
<dbReference type="HAMAP" id="MF_00151">
    <property type="entry name" value="PPAT_bact"/>
    <property type="match status" value="1"/>
</dbReference>
<dbReference type="InterPro" id="IPR004821">
    <property type="entry name" value="Cyt_trans-like"/>
</dbReference>
<dbReference type="InterPro" id="IPR001980">
    <property type="entry name" value="PPAT"/>
</dbReference>
<dbReference type="InterPro" id="IPR014729">
    <property type="entry name" value="Rossmann-like_a/b/a_fold"/>
</dbReference>
<dbReference type="NCBIfam" id="TIGR01510">
    <property type="entry name" value="coaD_prev_kdtB"/>
    <property type="match status" value="1"/>
</dbReference>
<dbReference type="NCBIfam" id="TIGR00125">
    <property type="entry name" value="cyt_tran_rel"/>
    <property type="match status" value="1"/>
</dbReference>
<dbReference type="PANTHER" id="PTHR21342">
    <property type="entry name" value="PHOSPHOPANTETHEINE ADENYLYLTRANSFERASE"/>
    <property type="match status" value="1"/>
</dbReference>
<dbReference type="PANTHER" id="PTHR21342:SF1">
    <property type="entry name" value="PHOSPHOPANTETHEINE ADENYLYLTRANSFERASE"/>
    <property type="match status" value="1"/>
</dbReference>
<dbReference type="Pfam" id="PF01467">
    <property type="entry name" value="CTP_transf_like"/>
    <property type="match status" value="1"/>
</dbReference>
<dbReference type="PRINTS" id="PR01020">
    <property type="entry name" value="LPSBIOSNTHSS"/>
</dbReference>
<dbReference type="SUPFAM" id="SSF52374">
    <property type="entry name" value="Nucleotidylyl transferase"/>
    <property type="match status" value="1"/>
</dbReference>
<protein>
    <recommendedName>
        <fullName evidence="1">Phosphopantetheine adenylyltransferase</fullName>
        <ecNumber evidence="1">2.7.7.3</ecNumber>
    </recommendedName>
    <alternativeName>
        <fullName evidence="1">Dephospho-CoA pyrophosphorylase</fullName>
    </alternativeName>
    <alternativeName>
        <fullName evidence="1">Pantetheine-phosphate adenylyltransferase</fullName>
        <shortName evidence="1">PPAT</shortName>
    </alternativeName>
</protein>
<organism>
    <name type="scientific">Francisella tularensis subsp. holarctica (strain LVS)</name>
    <dbReference type="NCBI Taxonomy" id="376619"/>
    <lineage>
        <taxon>Bacteria</taxon>
        <taxon>Pseudomonadati</taxon>
        <taxon>Pseudomonadota</taxon>
        <taxon>Gammaproteobacteria</taxon>
        <taxon>Thiotrichales</taxon>
        <taxon>Francisellaceae</taxon>
        <taxon>Francisella</taxon>
    </lineage>
</organism>
<feature type="chain" id="PRO_1000011146" description="Phosphopantetheine adenylyltransferase">
    <location>
        <begin position="1"/>
        <end position="162"/>
    </location>
</feature>
<feature type="binding site" evidence="1">
    <location>
        <begin position="10"/>
        <end position="11"/>
    </location>
    <ligand>
        <name>ATP</name>
        <dbReference type="ChEBI" id="CHEBI:30616"/>
    </ligand>
</feature>
<feature type="binding site" evidence="1">
    <location>
        <position position="10"/>
    </location>
    <ligand>
        <name>substrate</name>
    </ligand>
</feature>
<feature type="binding site" evidence="1">
    <location>
        <position position="18"/>
    </location>
    <ligand>
        <name>ATP</name>
        <dbReference type="ChEBI" id="CHEBI:30616"/>
    </ligand>
</feature>
<feature type="binding site" evidence="1">
    <location>
        <position position="42"/>
    </location>
    <ligand>
        <name>substrate</name>
    </ligand>
</feature>
<feature type="binding site" evidence="1">
    <location>
        <position position="74"/>
    </location>
    <ligand>
        <name>substrate</name>
    </ligand>
</feature>
<feature type="binding site" evidence="1">
    <location>
        <position position="88"/>
    </location>
    <ligand>
        <name>substrate</name>
    </ligand>
</feature>
<feature type="binding site" evidence="1">
    <location>
        <begin position="89"/>
        <end position="91"/>
    </location>
    <ligand>
        <name>ATP</name>
        <dbReference type="ChEBI" id="CHEBI:30616"/>
    </ligand>
</feature>
<feature type="binding site" evidence="1">
    <location>
        <position position="99"/>
    </location>
    <ligand>
        <name>ATP</name>
        <dbReference type="ChEBI" id="CHEBI:30616"/>
    </ligand>
</feature>
<feature type="binding site" evidence="1">
    <location>
        <begin position="124"/>
        <end position="130"/>
    </location>
    <ligand>
        <name>ATP</name>
        <dbReference type="ChEBI" id="CHEBI:30616"/>
    </ligand>
</feature>
<feature type="site" description="Transition state stabilizer" evidence="1">
    <location>
        <position position="18"/>
    </location>
</feature>
<gene>
    <name evidence="1" type="primary">coaD</name>
    <name type="ordered locus">FTL_1330</name>
</gene>
<proteinExistence type="inferred from homology"/>
<name>COAD_FRATH</name>